<feature type="chain" id="PRO_1000067461" description="C4-dicarboxylate transport protein">
    <location>
        <begin position="1"/>
        <end position="444"/>
    </location>
</feature>
<feature type="transmembrane region" description="Helical" evidence="1">
    <location>
        <begin position="17"/>
        <end position="37"/>
    </location>
</feature>
<feature type="transmembrane region" description="Helical" evidence="1">
    <location>
        <begin position="57"/>
        <end position="77"/>
    </location>
</feature>
<feature type="transmembrane region" description="Helical" evidence="1">
    <location>
        <begin position="92"/>
        <end position="112"/>
    </location>
</feature>
<feature type="transmembrane region" description="Helical" evidence="1">
    <location>
        <begin position="139"/>
        <end position="159"/>
    </location>
</feature>
<feature type="transmembrane region" description="Helical" evidence="1">
    <location>
        <begin position="161"/>
        <end position="181"/>
    </location>
</feature>
<feature type="transmembrane region" description="Helical" evidence="1">
    <location>
        <begin position="201"/>
        <end position="221"/>
    </location>
</feature>
<feature type="transmembrane region" description="Helical" evidence="1">
    <location>
        <begin position="234"/>
        <end position="254"/>
    </location>
</feature>
<feature type="transmembrane region" description="Helical" evidence="1">
    <location>
        <begin position="320"/>
        <end position="340"/>
    </location>
</feature>
<feature type="transmembrane region" description="Helical" evidence="1">
    <location>
        <begin position="368"/>
        <end position="388"/>
    </location>
</feature>
<organism>
    <name type="scientific">Rhizobium johnstonii (strain DSM 114642 / LMG 32736 / 3841)</name>
    <name type="common">Rhizobium leguminosarum bv. viciae</name>
    <dbReference type="NCBI Taxonomy" id="216596"/>
    <lineage>
        <taxon>Bacteria</taxon>
        <taxon>Pseudomonadati</taxon>
        <taxon>Pseudomonadota</taxon>
        <taxon>Alphaproteobacteria</taxon>
        <taxon>Hyphomicrobiales</taxon>
        <taxon>Rhizobiaceae</taxon>
        <taxon>Rhizobium/Agrobacterium group</taxon>
        <taxon>Rhizobium</taxon>
        <taxon>Rhizobium johnstonii</taxon>
    </lineage>
</organism>
<evidence type="ECO:0000255" key="1">
    <source>
        <dbReference type="HAMAP-Rule" id="MF_01300"/>
    </source>
</evidence>
<gene>
    <name evidence="1" type="primary">dctA</name>
    <name type="ordered locus">RL3424</name>
</gene>
<dbReference type="EMBL" id="AM236080">
    <property type="protein sequence ID" value="CAK08912.1"/>
    <property type="molecule type" value="Genomic_DNA"/>
</dbReference>
<dbReference type="RefSeq" id="WP_011652906.1">
    <property type="nucleotide sequence ID" value="NC_008380.1"/>
</dbReference>
<dbReference type="SMR" id="Q1MDR5"/>
<dbReference type="EnsemblBacteria" id="CAK08912">
    <property type="protein sequence ID" value="CAK08912"/>
    <property type="gene ID" value="RL3424"/>
</dbReference>
<dbReference type="KEGG" id="rle:RL3424"/>
<dbReference type="eggNOG" id="COG1301">
    <property type="taxonomic scope" value="Bacteria"/>
</dbReference>
<dbReference type="HOGENOM" id="CLU_019375_7_0_5"/>
<dbReference type="Proteomes" id="UP000006575">
    <property type="component" value="Chromosome"/>
</dbReference>
<dbReference type="GO" id="GO:0005886">
    <property type="term" value="C:plasma membrane"/>
    <property type="evidence" value="ECO:0007669"/>
    <property type="project" value="UniProtKB-SubCell"/>
</dbReference>
<dbReference type="GO" id="GO:0015138">
    <property type="term" value="F:fumarate transmembrane transporter activity"/>
    <property type="evidence" value="ECO:0007669"/>
    <property type="project" value="TreeGrafter"/>
</dbReference>
<dbReference type="GO" id="GO:0015366">
    <property type="term" value="F:malate:proton symporter activity"/>
    <property type="evidence" value="ECO:0007669"/>
    <property type="project" value="TreeGrafter"/>
</dbReference>
<dbReference type="GO" id="GO:0015141">
    <property type="term" value="F:succinate transmembrane transporter activity"/>
    <property type="evidence" value="ECO:0007669"/>
    <property type="project" value="TreeGrafter"/>
</dbReference>
<dbReference type="GO" id="GO:0070778">
    <property type="term" value="P:L-aspartate transmembrane transport"/>
    <property type="evidence" value="ECO:0007669"/>
    <property type="project" value="TreeGrafter"/>
</dbReference>
<dbReference type="FunFam" id="1.10.3860.10:FF:000001">
    <property type="entry name" value="C4-dicarboxylate transport protein"/>
    <property type="match status" value="1"/>
</dbReference>
<dbReference type="Gene3D" id="1.10.3860.10">
    <property type="entry name" value="Sodium:dicarboxylate symporter"/>
    <property type="match status" value="1"/>
</dbReference>
<dbReference type="HAMAP" id="MF_01300">
    <property type="entry name" value="C4_dicarb_transport"/>
    <property type="match status" value="1"/>
</dbReference>
<dbReference type="InterPro" id="IPR023954">
    <property type="entry name" value="C4_dicarb_transport"/>
</dbReference>
<dbReference type="InterPro" id="IPR001991">
    <property type="entry name" value="Na-dicarboxylate_symporter"/>
</dbReference>
<dbReference type="InterPro" id="IPR018107">
    <property type="entry name" value="Na-dicarboxylate_symporter_CS"/>
</dbReference>
<dbReference type="InterPro" id="IPR036458">
    <property type="entry name" value="Na:dicarbo_symporter_sf"/>
</dbReference>
<dbReference type="NCBIfam" id="NF002461">
    <property type="entry name" value="PRK01663.1"/>
    <property type="match status" value="1"/>
</dbReference>
<dbReference type="NCBIfam" id="NF009587">
    <property type="entry name" value="PRK13027.1"/>
    <property type="match status" value="1"/>
</dbReference>
<dbReference type="PANTHER" id="PTHR42865:SF1">
    <property type="entry name" value="AEROBIC C4-DICARBOXYLATE TRANSPORT PROTEIN"/>
    <property type="match status" value="1"/>
</dbReference>
<dbReference type="PANTHER" id="PTHR42865">
    <property type="entry name" value="PROTON/GLUTAMATE-ASPARTATE SYMPORTER"/>
    <property type="match status" value="1"/>
</dbReference>
<dbReference type="Pfam" id="PF00375">
    <property type="entry name" value="SDF"/>
    <property type="match status" value="1"/>
</dbReference>
<dbReference type="PRINTS" id="PR00173">
    <property type="entry name" value="EDTRNSPORT"/>
</dbReference>
<dbReference type="SUPFAM" id="SSF118215">
    <property type="entry name" value="Proton glutamate symport protein"/>
    <property type="match status" value="1"/>
</dbReference>
<dbReference type="PROSITE" id="PS00713">
    <property type="entry name" value="NA_DICARBOXYL_SYMP_1"/>
    <property type="match status" value="1"/>
</dbReference>
<dbReference type="PROSITE" id="PS00714">
    <property type="entry name" value="NA_DICARBOXYL_SYMP_2"/>
    <property type="match status" value="1"/>
</dbReference>
<proteinExistence type="inferred from homology"/>
<accession>Q1MDR5</accession>
<sequence length="444" mass="45975">MIAAPLDAVADSKGKKPFYTHLYVQVLAAIAAGILLGHFYPEFGTQLKPLGDAFIKLVKMIIAPVIFLTVATGIAGMSDLQKVGRVAGKAMLYFLTFSTLALIIGLIVANVVQPGAGMNIDPASLDPAAVAGYAAKAHEQSIVGFLTNIIPTTIVGAFADGDILQVLFFSVLFGIALAMVGEKSEPVVNFLNALTAPVFKLVAILMKAAPIGAFGAMAFTIGKYGVGSIANLAMLIGTFYITSLLFVLVVLGAVARYNGFSIVALLRYIKEELLLVLGTSSSEAALPGLMNKMEKAGCKRSVVGLVIPTGYSFNLDGTNIYMTLAALFIAQATGIQLSWGDQILLLLVAMLSSKGAAGITGAGFITLAATLSVVPSVPVAGMALILGIDRFMSECRALTNLVGNAVATIVVARWENELDTAQLAAALGGQTGEMAPAGGLQPAE</sequence>
<keyword id="KW-0997">Cell inner membrane</keyword>
<keyword id="KW-1003">Cell membrane</keyword>
<keyword id="KW-0472">Membrane</keyword>
<keyword id="KW-0769">Symport</keyword>
<keyword id="KW-0812">Transmembrane</keyword>
<keyword id="KW-1133">Transmembrane helix</keyword>
<keyword id="KW-0813">Transport</keyword>
<comment type="function">
    <text evidence="1">Responsible for the transport of dicarboxylates such as succinate, fumarate, and malate from the periplasm across the membrane.</text>
</comment>
<comment type="subcellular location">
    <subcellularLocation>
        <location evidence="1">Cell inner membrane</location>
        <topology evidence="1">Multi-pass membrane protein</topology>
    </subcellularLocation>
</comment>
<comment type="similarity">
    <text evidence="1">Belongs to the dicarboxylate/amino acid:cation symporter (DAACS) (TC 2.A.23) family.</text>
</comment>
<name>DCTA_RHIJ3</name>
<reference key="1">
    <citation type="journal article" date="2006" name="Genome Biol.">
        <title>The genome of Rhizobium leguminosarum has recognizable core and accessory components.</title>
        <authorList>
            <person name="Young J.P.W."/>
            <person name="Crossman L.C."/>
            <person name="Johnston A.W.B."/>
            <person name="Thomson N.R."/>
            <person name="Ghazoui Z.F."/>
            <person name="Hull K.H."/>
            <person name="Wexler M."/>
            <person name="Curson A.R.J."/>
            <person name="Todd J.D."/>
            <person name="Poole P.S."/>
            <person name="Mauchline T.H."/>
            <person name="East A.K."/>
            <person name="Quail M.A."/>
            <person name="Churcher C."/>
            <person name="Arrowsmith C."/>
            <person name="Cherevach I."/>
            <person name="Chillingworth T."/>
            <person name="Clarke K."/>
            <person name="Cronin A."/>
            <person name="Davis P."/>
            <person name="Fraser A."/>
            <person name="Hance Z."/>
            <person name="Hauser H."/>
            <person name="Jagels K."/>
            <person name="Moule S."/>
            <person name="Mungall K."/>
            <person name="Norbertczak H."/>
            <person name="Rabbinowitsch E."/>
            <person name="Sanders M."/>
            <person name="Simmonds M."/>
            <person name="Whitehead S."/>
            <person name="Parkhill J."/>
        </authorList>
    </citation>
    <scope>NUCLEOTIDE SEQUENCE [LARGE SCALE GENOMIC DNA]</scope>
    <source>
        <strain>DSM 114642 / LMG 32736 / 3841</strain>
    </source>
</reference>
<protein>
    <recommendedName>
        <fullName evidence="1">C4-dicarboxylate transport protein</fullName>
    </recommendedName>
</protein>